<proteinExistence type="evidence at transcript level"/>
<dbReference type="EC" id="3.6.4.13"/>
<dbReference type="EMBL" id="AL163792">
    <property type="protein sequence ID" value="CAB87628.1"/>
    <property type="status" value="ALT_SEQ"/>
    <property type="molecule type" value="Genomic_DNA"/>
</dbReference>
<dbReference type="EMBL" id="CP002688">
    <property type="protein sequence ID" value="AED92055.1"/>
    <property type="molecule type" value="Genomic_DNA"/>
</dbReference>
<dbReference type="EMBL" id="AK228819">
    <property type="protein sequence ID" value="BAF00715.1"/>
    <property type="molecule type" value="mRNA"/>
</dbReference>
<dbReference type="PIR" id="T48634">
    <property type="entry name" value="T48634"/>
</dbReference>
<dbReference type="RefSeq" id="NP_001190309.1">
    <molecule id="Q9LYJ9-1"/>
    <property type="nucleotide sequence ID" value="NM_001203380.1"/>
</dbReference>
<dbReference type="SMR" id="Q9LYJ9"/>
<dbReference type="BioGRID" id="16590">
    <property type="interactions" value="3"/>
</dbReference>
<dbReference type="FunCoup" id="Q9LYJ9">
    <property type="interactions" value="175"/>
</dbReference>
<dbReference type="STRING" id="3702.Q9LYJ9"/>
<dbReference type="iPTMnet" id="Q9LYJ9"/>
<dbReference type="PaxDb" id="3702-AT5G14610.1"/>
<dbReference type="ProteomicsDB" id="236858">
    <molecule id="Q9LYJ9-1"/>
</dbReference>
<dbReference type="EnsemblPlants" id="AT5G14610.2">
    <molecule id="Q9LYJ9-1"/>
    <property type="protein sequence ID" value="AT5G14610.2"/>
    <property type="gene ID" value="AT5G14610"/>
</dbReference>
<dbReference type="GeneID" id="831313"/>
<dbReference type="Gramene" id="AT5G14610.2">
    <molecule id="Q9LYJ9-1"/>
    <property type="protein sequence ID" value="AT5G14610.2"/>
    <property type="gene ID" value="AT5G14610"/>
</dbReference>
<dbReference type="KEGG" id="ath:AT5G14610"/>
<dbReference type="Araport" id="AT5G14610"/>
<dbReference type="TAIR" id="AT5G14610">
    <property type="gene designation" value="RH46"/>
</dbReference>
<dbReference type="HOGENOM" id="CLU_003041_31_1_1"/>
<dbReference type="InParanoid" id="Q9LYJ9"/>
<dbReference type="OrthoDB" id="6492176at2759"/>
<dbReference type="PhylomeDB" id="Q9LYJ9"/>
<dbReference type="CD-CODE" id="4299E36E">
    <property type="entry name" value="Nucleolus"/>
</dbReference>
<dbReference type="PRO" id="PR:Q9LYJ9"/>
<dbReference type="Proteomes" id="UP000006548">
    <property type="component" value="Chromosome 5"/>
</dbReference>
<dbReference type="ExpressionAtlas" id="Q9LYJ9">
    <property type="expression patterns" value="baseline and differential"/>
</dbReference>
<dbReference type="GO" id="GO:0005524">
    <property type="term" value="F:ATP binding"/>
    <property type="evidence" value="ECO:0007669"/>
    <property type="project" value="UniProtKB-KW"/>
</dbReference>
<dbReference type="GO" id="GO:0016887">
    <property type="term" value="F:ATP hydrolysis activity"/>
    <property type="evidence" value="ECO:0007669"/>
    <property type="project" value="RHEA"/>
</dbReference>
<dbReference type="GO" id="GO:0003723">
    <property type="term" value="F:RNA binding"/>
    <property type="evidence" value="ECO:0007669"/>
    <property type="project" value="UniProtKB-KW"/>
</dbReference>
<dbReference type="GO" id="GO:0003724">
    <property type="term" value="F:RNA helicase activity"/>
    <property type="evidence" value="ECO:0007669"/>
    <property type="project" value="UniProtKB-EC"/>
</dbReference>
<dbReference type="CDD" id="cd18787">
    <property type="entry name" value="SF2_C_DEAD"/>
    <property type="match status" value="1"/>
</dbReference>
<dbReference type="CDD" id="cd00201">
    <property type="entry name" value="WW"/>
    <property type="match status" value="1"/>
</dbReference>
<dbReference type="FunFam" id="3.40.50.300:FF:000008">
    <property type="entry name" value="ATP-dependent RNA helicase RhlB"/>
    <property type="match status" value="1"/>
</dbReference>
<dbReference type="FunFam" id="2.20.70.10:FF:000124">
    <property type="entry name" value="DEAD box RNA helicase family protein"/>
    <property type="match status" value="1"/>
</dbReference>
<dbReference type="FunFam" id="3.40.50.300:FF:000079">
    <property type="entry name" value="probable ATP-dependent RNA helicase DDX17"/>
    <property type="match status" value="1"/>
</dbReference>
<dbReference type="Gene3D" id="2.20.70.10">
    <property type="match status" value="1"/>
</dbReference>
<dbReference type="Gene3D" id="3.40.50.300">
    <property type="entry name" value="P-loop containing nucleotide triphosphate hydrolases"/>
    <property type="match status" value="2"/>
</dbReference>
<dbReference type="InterPro" id="IPR011545">
    <property type="entry name" value="DEAD/DEAH_box_helicase_dom"/>
</dbReference>
<dbReference type="InterPro" id="IPR014001">
    <property type="entry name" value="Helicase_ATP-bd"/>
</dbReference>
<dbReference type="InterPro" id="IPR001650">
    <property type="entry name" value="Helicase_C-like"/>
</dbReference>
<dbReference type="InterPro" id="IPR027417">
    <property type="entry name" value="P-loop_NTPase"/>
</dbReference>
<dbReference type="InterPro" id="IPR000629">
    <property type="entry name" value="RNA-helicase_DEAD-box_CS"/>
</dbReference>
<dbReference type="InterPro" id="IPR014014">
    <property type="entry name" value="RNA_helicase_DEAD_Q_motif"/>
</dbReference>
<dbReference type="InterPro" id="IPR001202">
    <property type="entry name" value="WW_dom"/>
</dbReference>
<dbReference type="InterPro" id="IPR036020">
    <property type="entry name" value="WW_dom_sf"/>
</dbReference>
<dbReference type="PANTHER" id="PTHR47958">
    <property type="entry name" value="ATP-DEPENDENT RNA HELICASE DBP3"/>
    <property type="match status" value="1"/>
</dbReference>
<dbReference type="Pfam" id="PF00270">
    <property type="entry name" value="DEAD"/>
    <property type="match status" value="1"/>
</dbReference>
<dbReference type="Pfam" id="PF00271">
    <property type="entry name" value="Helicase_C"/>
    <property type="match status" value="1"/>
</dbReference>
<dbReference type="Pfam" id="PF00397">
    <property type="entry name" value="WW"/>
    <property type="match status" value="1"/>
</dbReference>
<dbReference type="SMART" id="SM00487">
    <property type="entry name" value="DEXDc"/>
    <property type="match status" value="1"/>
</dbReference>
<dbReference type="SMART" id="SM00490">
    <property type="entry name" value="HELICc"/>
    <property type="match status" value="1"/>
</dbReference>
<dbReference type="SMART" id="SM00456">
    <property type="entry name" value="WW"/>
    <property type="match status" value="1"/>
</dbReference>
<dbReference type="SUPFAM" id="SSF52540">
    <property type="entry name" value="P-loop containing nucleoside triphosphate hydrolases"/>
    <property type="match status" value="1"/>
</dbReference>
<dbReference type="SUPFAM" id="SSF51045">
    <property type="entry name" value="WW domain"/>
    <property type="match status" value="1"/>
</dbReference>
<dbReference type="PROSITE" id="PS00039">
    <property type="entry name" value="DEAD_ATP_HELICASE"/>
    <property type="match status" value="1"/>
</dbReference>
<dbReference type="PROSITE" id="PS51192">
    <property type="entry name" value="HELICASE_ATP_BIND_1"/>
    <property type="match status" value="1"/>
</dbReference>
<dbReference type="PROSITE" id="PS51194">
    <property type="entry name" value="HELICASE_CTER"/>
    <property type="match status" value="1"/>
</dbReference>
<dbReference type="PROSITE" id="PS51195">
    <property type="entry name" value="Q_MOTIF"/>
    <property type="match status" value="1"/>
</dbReference>
<dbReference type="PROSITE" id="PS01159">
    <property type="entry name" value="WW_DOMAIN_1"/>
    <property type="match status" value="1"/>
</dbReference>
<dbReference type="PROSITE" id="PS50020">
    <property type="entry name" value="WW_DOMAIN_2"/>
    <property type="match status" value="1"/>
</dbReference>
<accession>Q9LYJ9</accession>
<accession>Q0WQ84</accession>
<feature type="chain" id="PRO_0000239186" description="DEAD-box ATP-dependent RNA helicase 46">
    <location>
        <begin position="1"/>
        <end position="645"/>
    </location>
</feature>
<feature type="domain" description="WW" evidence="1">
    <location>
        <begin position="15"/>
        <end position="49"/>
    </location>
</feature>
<feature type="domain" description="Helicase ATP-binding" evidence="2">
    <location>
        <begin position="192"/>
        <end position="366"/>
    </location>
</feature>
<feature type="domain" description="Helicase C-terminal" evidence="3">
    <location>
        <begin position="395"/>
        <end position="539"/>
    </location>
</feature>
<feature type="region of interest" description="Disordered" evidence="4">
    <location>
        <begin position="1"/>
        <end position="22"/>
    </location>
</feature>
<feature type="region of interest" description="Disordered" evidence="4">
    <location>
        <begin position="44"/>
        <end position="137"/>
    </location>
</feature>
<feature type="region of interest" description="Disordered" evidence="4">
    <location>
        <begin position="532"/>
        <end position="645"/>
    </location>
</feature>
<feature type="short sequence motif" description="Q motif">
    <location>
        <begin position="161"/>
        <end position="189"/>
    </location>
</feature>
<feature type="short sequence motif" description="DEAD box">
    <location>
        <begin position="314"/>
        <end position="317"/>
    </location>
</feature>
<feature type="compositionally biased region" description="Low complexity" evidence="4">
    <location>
        <begin position="60"/>
        <end position="72"/>
    </location>
</feature>
<feature type="compositionally biased region" description="Basic and acidic residues" evidence="4">
    <location>
        <begin position="77"/>
        <end position="91"/>
    </location>
</feature>
<feature type="compositionally biased region" description="Low complexity" evidence="4">
    <location>
        <begin position="108"/>
        <end position="136"/>
    </location>
</feature>
<feature type="compositionally biased region" description="Gly residues" evidence="4">
    <location>
        <begin position="556"/>
        <end position="597"/>
    </location>
</feature>
<feature type="compositionally biased region" description="Low complexity" evidence="4">
    <location>
        <begin position="598"/>
        <end position="608"/>
    </location>
</feature>
<feature type="compositionally biased region" description="Basic and acidic residues" evidence="4">
    <location>
        <begin position="612"/>
        <end position="623"/>
    </location>
</feature>
<feature type="compositionally biased region" description="Low complexity" evidence="4">
    <location>
        <begin position="624"/>
        <end position="634"/>
    </location>
</feature>
<feature type="binding site" evidence="2">
    <location>
        <begin position="205"/>
        <end position="212"/>
    </location>
    <ligand>
        <name>ATP</name>
        <dbReference type="ChEBI" id="CHEBI:30616"/>
    </ligand>
</feature>
<feature type="splice variant" id="VSP_024120" description="In isoform 2." evidence="5">
    <location>
        <begin position="1"/>
        <end position="195"/>
    </location>
</feature>
<gene>
    <name type="primary">RH46</name>
    <name type="ordered locus">At5g14610</name>
    <name type="ORF">T15N1_100</name>
</gene>
<organism>
    <name type="scientific">Arabidopsis thaliana</name>
    <name type="common">Mouse-ear cress</name>
    <dbReference type="NCBI Taxonomy" id="3702"/>
    <lineage>
        <taxon>Eukaryota</taxon>
        <taxon>Viridiplantae</taxon>
        <taxon>Streptophyta</taxon>
        <taxon>Embryophyta</taxon>
        <taxon>Tracheophyta</taxon>
        <taxon>Spermatophyta</taxon>
        <taxon>Magnoliopsida</taxon>
        <taxon>eudicotyledons</taxon>
        <taxon>Gunneridae</taxon>
        <taxon>Pentapetalae</taxon>
        <taxon>rosids</taxon>
        <taxon>malvids</taxon>
        <taxon>Brassicales</taxon>
        <taxon>Brassicaceae</taxon>
        <taxon>Camelineae</taxon>
        <taxon>Arabidopsis</taxon>
    </lineage>
</organism>
<sequence length="645" mass="69196">MAATASAIRYAPEDPNLPKPWKGLVDSRTGYLYFWNPETNVTQYERPASSAPPKLAAIPVSSSVQTNQQSSSGFNSGKEDDKYGRGSDGPKSDSGSRFNEAGRTGPISSNDAASGLGNASSGGSSARGPPSSAAGNELSPEAYCRKHEITVSGGQVPPPLMSFEATGLPNELLREVYSAGFSAPSPIQAQSWPIAMQNRDIVAIAKTGSGKTLGYLIPGFMHLQRIHNDSRMGPTILVLSPTRELATQIQVEALKFGKSSKISCACLYGGAPKGPQLKEIERGVDIVVATPGRLNDILEMKRISLHQVSYLVLDEADRMLDMGFEPQIRKIVNEVPTKRQTLMYTATWPKEVRKIAADLLVNPAQVNIGNVDELVANKSITQTIEVLAPMEKHSRLEQILRSQEPGSKIIIFCSTKRMCDQLARNLTRTFGAAAIHGDKSQAERDDVLNQFRSGRTPVLVATDVAARGLDVKDIRVVVNYDFPNGVEDYVHRIGRTGRAGATGLAYTFFGDQDAKHASDLIKILEGANQKVPPQVREMATRGGGGMNKFRRWGTPSSGGGGGRGGYGDSGYGGRGESGYGSRGDSGYGGRGDSGGRGSWAPSRDSSGSSGWGRERSRSPERFRGGPPSTSSPPRSFHEAMMMKNR</sequence>
<comment type="catalytic activity">
    <reaction>
        <text>ATP + H2O = ADP + phosphate + H(+)</text>
        <dbReference type="Rhea" id="RHEA:13065"/>
        <dbReference type="ChEBI" id="CHEBI:15377"/>
        <dbReference type="ChEBI" id="CHEBI:15378"/>
        <dbReference type="ChEBI" id="CHEBI:30616"/>
        <dbReference type="ChEBI" id="CHEBI:43474"/>
        <dbReference type="ChEBI" id="CHEBI:456216"/>
        <dbReference type="EC" id="3.6.4.13"/>
    </reaction>
</comment>
<comment type="alternative products">
    <event type="alternative splicing"/>
    <isoform>
        <id>Q9LYJ9-1</id>
        <name>1</name>
        <sequence type="displayed"/>
    </isoform>
    <isoform>
        <id>Q9LYJ9-2</id>
        <name>2</name>
        <sequence type="described" ref="VSP_024120"/>
    </isoform>
</comment>
<comment type="domain">
    <text>The Q motif is unique to and characteristic of the DEAD box family of RNA helicases and controls ATP binding and hydrolysis.</text>
</comment>
<comment type="similarity">
    <text evidence="6">Belongs to the DEAD box helicase family. DDX5/DBP2 subfamily.</text>
</comment>
<comment type="sequence caution" evidence="6">
    <conflict type="erroneous gene model prediction">
        <sequence resource="EMBL-CDS" id="CAB87628"/>
    </conflict>
</comment>
<name>RH46_ARATH</name>
<evidence type="ECO:0000255" key="1">
    <source>
        <dbReference type="PROSITE-ProRule" id="PRU00224"/>
    </source>
</evidence>
<evidence type="ECO:0000255" key="2">
    <source>
        <dbReference type="PROSITE-ProRule" id="PRU00541"/>
    </source>
</evidence>
<evidence type="ECO:0000255" key="3">
    <source>
        <dbReference type="PROSITE-ProRule" id="PRU00542"/>
    </source>
</evidence>
<evidence type="ECO:0000256" key="4">
    <source>
        <dbReference type="SAM" id="MobiDB-lite"/>
    </source>
</evidence>
<evidence type="ECO:0000303" key="5">
    <source ref="3"/>
</evidence>
<evidence type="ECO:0000305" key="6"/>
<keyword id="KW-0025">Alternative splicing</keyword>
<keyword id="KW-0067">ATP-binding</keyword>
<keyword id="KW-0347">Helicase</keyword>
<keyword id="KW-0378">Hydrolase</keyword>
<keyword id="KW-0547">Nucleotide-binding</keyword>
<keyword id="KW-1185">Reference proteome</keyword>
<keyword id="KW-0694">RNA-binding</keyword>
<protein>
    <recommendedName>
        <fullName>DEAD-box ATP-dependent RNA helicase 46</fullName>
        <ecNumber>3.6.4.13</ecNumber>
    </recommendedName>
</protein>
<reference key="1">
    <citation type="journal article" date="2000" name="Nature">
        <title>Sequence and analysis of chromosome 5 of the plant Arabidopsis thaliana.</title>
        <authorList>
            <person name="Tabata S."/>
            <person name="Kaneko T."/>
            <person name="Nakamura Y."/>
            <person name="Kotani H."/>
            <person name="Kato T."/>
            <person name="Asamizu E."/>
            <person name="Miyajima N."/>
            <person name="Sasamoto S."/>
            <person name="Kimura T."/>
            <person name="Hosouchi T."/>
            <person name="Kawashima K."/>
            <person name="Kohara M."/>
            <person name="Matsumoto M."/>
            <person name="Matsuno A."/>
            <person name="Muraki A."/>
            <person name="Nakayama S."/>
            <person name="Nakazaki N."/>
            <person name="Naruo K."/>
            <person name="Okumura S."/>
            <person name="Shinpo S."/>
            <person name="Takeuchi C."/>
            <person name="Wada T."/>
            <person name="Watanabe A."/>
            <person name="Yamada M."/>
            <person name="Yasuda M."/>
            <person name="Sato S."/>
            <person name="de la Bastide M."/>
            <person name="Huang E."/>
            <person name="Spiegel L."/>
            <person name="Gnoj L."/>
            <person name="O'Shaughnessy A."/>
            <person name="Preston R."/>
            <person name="Habermann K."/>
            <person name="Murray J."/>
            <person name="Johnson D."/>
            <person name="Rohlfing T."/>
            <person name="Nelson J."/>
            <person name="Stoneking T."/>
            <person name="Pepin K."/>
            <person name="Spieth J."/>
            <person name="Sekhon M."/>
            <person name="Armstrong J."/>
            <person name="Becker M."/>
            <person name="Belter E."/>
            <person name="Cordum H."/>
            <person name="Cordes M."/>
            <person name="Courtney L."/>
            <person name="Courtney W."/>
            <person name="Dante M."/>
            <person name="Du H."/>
            <person name="Edwards J."/>
            <person name="Fryman J."/>
            <person name="Haakensen B."/>
            <person name="Lamar E."/>
            <person name="Latreille P."/>
            <person name="Leonard S."/>
            <person name="Meyer R."/>
            <person name="Mulvaney E."/>
            <person name="Ozersky P."/>
            <person name="Riley A."/>
            <person name="Strowmatt C."/>
            <person name="Wagner-McPherson C."/>
            <person name="Wollam A."/>
            <person name="Yoakum M."/>
            <person name="Bell M."/>
            <person name="Dedhia N."/>
            <person name="Parnell L."/>
            <person name="Shah R."/>
            <person name="Rodriguez M."/>
            <person name="Hoon See L."/>
            <person name="Vil D."/>
            <person name="Baker J."/>
            <person name="Kirchoff K."/>
            <person name="Toth K."/>
            <person name="King L."/>
            <person name="Bahret A."/>
            <person name="Miller B."/>
            <person name="Marra M.A."/>
            <person name="Martienssen R."/>
            <person name="McCombie W.R."/>
            <person name="Wilson R.K."/>
            <person name="Murphy G."/>
            <person name="Bancroft I."/>
            <person name="Volckaert G."/>
            <person name="Wambutt R."/>
            <person name="Duesterhoeft A."/>
            <person name="Stiekema W."/>
            <person name="Pohl T."/>
            <person name="Entian K.-D."/>
            <person name="Terryn N."/>
            <person name="Hartley N."/>
            <person name="Bent E."/>
            <person name="Johnson S."/>
            <person name="Langham S.-A."/>
            <person name="McCullagh B."/>
            <person name="Robben J."/>
            <person name="Grymonprez B."/>
            <person name="Zimmermann W."/>
            <person name="Ramsperger U."/>
            <person name="Wedler H."/>
            <person name="Balke K."/>
            <person name="Wedler E."/>
            <person name="Peters S."/>
            <person name="van Staveren M."/>
            <person name="Dirkse W."/>
            <person name="Mooijman P."/>
            <person name="Klein Lankhorst R."/>
            <person name="Weitzenegger T."/>
            <person name="Bothe G."/>
            <person name="Rose M."/>
            <person name="Hauf J."/>
            <person name="Berneiser S."/>
            <person name="Hempel S."/>
            <person name="Feldpausch M."/>
            <person name="Lamberth S."/>
            <person name="Villarroel R."/>
            <person name="Gielen J."/>
            <person name="Ardiles W."/>
            <person name="Bents O."/>
            <person name="Lemcke K."/>
            <person name="Kolesov G."/>
            <person name="Mayer K.F.X."/>
            <person name="Rudd S."/>
            <person name="Schoof H."/>
            <person name="Schueller C."/>
            <person name="Zaccaria P."/>
            <person name="Mewes H.-W."/>
            <person name="Bevan M."/>
            <person name="Fransz P.F."/>
        </authorList>
    </citation>
    <scope>NUCLEOTIDE SEQUENCE [LARGE SCALE GENOMIC DNA]</scope>
    <source>
        <strain>cv. Columbia</strain>
    </source>
</reference>
<reference key="2">
    <citation type="journal article" date="2017" name="Plant J.">
        <title>Araport11: a complete reannotation of the Arabidopsis thaliana reference genome.</title>
        <authorList>
            <person name="Cheng C.Y."/>
            <person name="Krishnakumar V."/>
            <person name="Chan A.P."/>
            <person name="Thibaud-Nissen F."/>
            <person name="Schobel S."/>
            <person name="Town C.D."/>
        </authorList>
    </citation>
    <scope>GENOME REANNOTATION</scope>
    <source>
        <strain>cv. Columbia</strain>
    </source>
</reference>
<reference key="3">
    <citation type="submission" date="2006-07" db="EMBL/GenBank/DDBJ databases">
        <title>Large-scale analysis of RIKEN Arabidopsis full-length (RAFL) cDNAs.</title>
        <authorList>
            <person name="Totoki Y."/>
            <person name="Seki M."/>
            <person name="Ishida J."/>
            <person name="Nakajima M."/>
            <person name="Enju A."/>
            <person name="Kamiya A."/>
            <person name="Narusaka M."/>
            <person name="Shin-i T."/>
            <person name="Nakagawa M."/>
            <person name="Sakamoto N."/>
            <person name="Oishi K."/>
            <person name="Kohara Y."/>
            <person name="Kobayashi M."/>
            <person name="Toyoda A."/>
            <person name="Sakaki Y."/>
            <person name="Sakurai T."/>
            <person name="Iida K."/>
            <person name="Akiyama K."/>
            <person name="Satou M."/>
            <person name="Toyoda T."/>
            <person name="Konagaya A."/>
            <person name="Carninci P."/>
            <person name="Kawai J."/>
            <person name="Hayashizaki Y."/>
            <person name="Shinozaki K."/>
        </authorList>
    </citation>
    <scope>NUCLEOTIDE SEQUENCE [LARGE SCALE MRNA] (ISOFORM 2)</scope>
    <source>
        <strain>cv. Columbia</strain>
    </source>
</reference>
<reference key="4">
    <citation type="journal article" date="2004" name="Plant Biotechnol. J.">
        <title>DEAD-box RNA helicases in Arabidopsis thaliana: establishing a link between quantitative expression, gene structure and evolution of a family of genes.</title>
        <authorList>
            <person name="Mingam A."/>
            <person name="Toffano-Nioche C."/>
            <person name="Brunaud V."/>
            <person name="Boudet N."/>
            <person name="Kreis M."/>
            <person name="Lecharny A."/>
        </authorList>
    </citation>
    <scope>GENE FAMILY</scope>
    <scope>NOMENCLATURE</scope>
</reference>
<reference key="5">
    <citation type="journal article" date="2013" name="PLoS ONE">
        <title>Genome-wide comparative in silico analysis of the RNA helicase gene family in Zea mays and Glycine max: a comparison with Arabidopsis and Oryza sativa.</title>
        <authorList>
            <person name="Xu R."/>
            <person name="Zhang S."/>
            <person name="Huang J."/>
            <person name="Zheng C."/>
        </authorList>
    </citation>
    <scope>GENE FAMILY</scope>
</reference>